<reference key="1">
    <citation type="journal article" date="2000" name="Nature">
        <title>Complete genome sequence of Pseudomonas aeruginosa PAO1, an opportunistic pathogen.</title>
        <authorList>
            <person name="Stover C.K."/>
            <person name="Pham X.-Q.T."/>
            <person name="Erwin A.L."/>
            <person name="Mizoguchi S.D."/>
            <person name="Warrener P."/>
            <person name="Hickey M.J."/>
            <person name="Brinkman F.S.L."/>
            <person name="Hufnagle W.O."/>
            <person name="Kowalik D.J."/>
            <person name="Lagrou M."/>
            <person name="Garber R.L."/>
            <person name="Goltry L."/>
            <person name="Tolentino E."/>
            <person name="Westbrock-Wadman S."/>
            <person name="Yuan Y."/>
            <person name="Brody L.L."/>
            <person name="Coulter S.N."/>
            <person name="Folger K.R."/>
            <person name="Kas A."/>
            <person name="Larbig K."/>
            <person name="Lim R.M."/>
            <person name="Smith K.A."/>
            <person name="Spencer D.H."/>
            <person name="Wong G.K.-S."/>
            <person name="Wu Z."/>
            <person name="Paulsen I.T."/>
            <person name="Reizer J."/>
            <person name="Saier M.H. Jr."/>
            <person name="Hancock R.E.W."/>
            <person name="Lory S."/>
            <person name="Olson M.V."/>
        </authorList>
    </citation>
    <scope>NUCLEOTIDE SEQUENCE [LARGE SCALE GENOMIC DNA]</scope>
    <source>
        <strain>ATCC 15692 / DSM 22644 / CIP 104116 / JCM 14847 / LMG 12228 / 1C / PRS 101 / PAO1</strain>
    </source>
</reference>
<reference key="2">
    <citation type="journal article" date="1995" name="Microbiology">
        <title>A direct sulfhydrylation pathway is used for methionine biosynthesis in Pseudomonas aeruginosa.</title>
        <authorList>
            <person name="Foglino M."/>
            <person name="Borne F."/>
            <person name="Bally M."/>
            <person name="Ball G."/>
            <person name="Patte J.-C."/>
        </authorList>
    </citation>
    <scope>NUCLEOTIDE SEQUENCE [GENOMIC DNA] OF 286-501</scope>
    <source>
        <strain>ATCC 15692 / DSM 22644 / CIP 104116 / JCM 14847 / LMG 12228 / 1C / PRS 101 / PAO1</strain>
    </source>
</reference>
<name>PUR1_PSEAE</name>
<dbReference type="EC" id="2.4.2.14" evidence="2"/>
<dbReference type="EMBL" id="AE004091">
    <property type="protein sequence ID" value="AAG06496.1"/>
    <property type="molecule type" value="Genomic_DNA"/>
</dbReference>
<dbReference type="EMBL" id="U10904">
    <property type="protein sequence ID" value="AAA83434.1"/>
    <property type="molecule type" value="Genomic_DNA"/>
</dbReference>
<dbReference type="PIR" id="G83256">
    <property type="entry name" value="G83256"/>
</dbReference>
<dbReference type="RefSeq" id="NP_251798.1">
    <property type="nucleotide sequence ID" value="NC_002516.2"/>
</dbReference>
<dbReference type="RefSeq" id="WP_003091383.1">
    <property type="nucleotide sequence ID" value="NZ_QZGE01000009.1"/>
</dbReference>
<dbReference type="SMR" id="Q51342"/>
<dbReference type="FunCoup" id="Q51342">
    <property type="interactions" value="702"/>
</dbReference>
<dbReference type="STRING" id="208964.PA3108"/>
<dbReference type="MEROPS" id="C44.001"/>
<dbReference type="PaxDb" id="208964-PA3108"/>
<dbReference type="GeneID" id="880477"/>
<dbReference type="KEGG" id="pae:PA3108"/>
<dbReference type="PATRIC" id="fig|208964.12.peg.3260"/>
<dbReference type="PseudoCAP" id="PA3108"/>
<dbReference type="HOGENOM" id="CLU_022389_2_1_6"/>
<dbReference type="InParanoid" id="Q51342"/>
<dbReference type="OrthoDB" id="9801213at2"/>
<dbReference type="PhylomeDB" id="Q51342"/>
<dbReference type="BioCyc" id="PAER208964:G1FZ6-3164-MONOMER"/>
<dbReference type="UniPathway" id="UPA00074">
    <property type="reaction ID" value="UER00124"/>
</dbReference>
<dbReference type="Proteomes" id="UP000002438">
    <property type="component" value="Chromosome"/>
</dbReference>
<dbReference type="GO" id="GO:0005737">
    <property type="term" value="C:cytoplasm"/>
    <property type="evidence" value="ECO:0000318"/>
    <property type="project" value="GO_Central"/>
</dbReference>
<dbReference type="GO" id="GO:0004044">
    <property type="term" value="F:amidophosphoribosyltransferase activity"/>
    <property type="evidence" value="ECO:0000318"/>
    <property type="project" value="GO_Central"/>
</dbReference>
<dbReference type="GO" id="GO:0000287">
    <property type="term" value="F:magnesium ion binding"/>
    <property type="evidence" value="ECO:0007669"/>
    <property type="project" value="UniProtKB-UniRule"/>
</dbReference>
<dbReference type="GO" id="GO:0006189">
    <property type="term" value="P:'de novo' IMP biosynthetic process"/>
    <property type="evidence" value="ECO:0007669"/>
    <property type="project" value="UniProtKB-UniRule"/>
</dbReference>
<dbReference type="GO" id="GO:0009113">
    <property type="term" value="P:purine nucleobase biosynthetic process"/>
    <property type="evidence" value="ECO:0007669"/>
    <property type="project" value="InterPro"/>
</dbReference>
<dbReference type="GO" id="GO:0006164">
    <property type="term" value="P:purine nucleotide biosynthetic process"/>
    <property type="evidence" value="ECO:0000318"/>
    <property type="project" value="GO_Central"/>
</dbReference>
<dbReference type="CDD" id="cd00715">
    <property type="entry name" value="GPATase_N"/>
    <property type="match status" value="1"/>
</dbReference>
<dbReference type="CDD" id="cd06223">
    <property type="entry name" value="PRTases_typeI"/>
    <property type="match status" value="1"/>
</dbReference>
<dbReference type="Gene3D" id="3.40.50.2020">
    <property type="match status" value="1"/>
</dbReference>
<dbReference type="Gene3D" id="3.60.20.10">
    <property type="entry name" value="Glutamine Phosphoribosylpyrophosphate, subunit 1, domain 1"/>
    <property type="match status" value="1"/>
</dbReference>
<dbReference type="HAMAP" id="MF_01931">
    <property type="entry name" value="PurF"/>
    <property type="match status" value="1"/>
</dbReference>
<dbReference type="InterPro" id="IPR017932">
    <property type="entry name" value="GATase_2_dom"/>
</dbReference>
<dbReference type="InterPro" id="IPR029055">
    <property type="entry name" value="Ntn_hydrolases_N"/>
</dbReference>
<dbReference type="InterPro" id="IPR000836">
    <property type="entry name" value="PRibTrfase_dom"/>
</dbReference>
<dbReference type="InterPro" id="IPR029057">
    <property type="entry name" value="PRTase-like"/>
</dbReference>
<dbReference type="InterPro" id="IPR005854">
    <property type="entry name" value="PurF"/>
</dbReference>
<dbReference type="InterPro" id="IPR035584">
    <property type="entry name" value="PurF_N"/>
</dbReference>
<dbReference type="NCBIfam" id="TIGR01134">
    <property type="entry name" value="purF"/>
    <property type="match status" value="1"/>
</dbReference>
<dbReference type="PANTHER" id="PTHR11907">
    <property type="entry name" value="AMIDOPHOSPHORIBOSYLTRANSFERASE"/>
    <property type="match status" value="1"/>
</dbReference>
<dbReference type="Pfam" id="PF13522">
    <property type="entry name" value="GATase_6"/>
    <property type="match status" value="1"/>
</dbReference>
<dbReference type="Pfam" id="PF00156">
    <property type="entry name" value="Pribosyltran"/>
    <property type="match status" value="1"/>
</dbReference>
<dbReference type="PIRSF" id="PIRSF000485">
    <property type="entry name" value="Amd_phspho_trans"/>
    <property type="match status" value="1"/>
</dbReference>
<dbReference type="SUPFAM" id="SSF56235">
    <property type="entry name" value="N-terminal nucleophile aminohydrolases (Ntn hydrolases)"/>
    <property type="match status" value="1"/>
</dbReference>
<dbReference type="SUPFAM" id="SSF53271">
    <property type="entry name" value="PRTase-like"/>
    <property type="match status" value="1"/>
</dbReference>
<dbReference type="PROSITE" id="PS51278">
    <property type="entry name" value="GATASE_TYPE_2"/>
    <property type="match status" value="1"/>
</dbReference>
<dbReference type="PROSITE" id="PS00103">
    <property type="entry name" value="PUR_PYR_PR_TRANSFER"/>
    <property type="match status" value="1"/>
</dbReference>
<proteinExistence type="inferred from homology"/>
<sequence length="501" mass="55370">MCGIVGIVGKSNVNQALYDALTVLQHRGQDAAGIVTCHDDKLYLRKDNGLVRDVFQQRHMQRLIGSVGIGHVRYPTAGSSSSAEAQPFYVNSPYGITLAHNGNLTNVEQLAKEIYESDLRHVNTNSDSEVLLNVFAHELAVRNKLQPTEEDIFAAVSCVHDRCVGGYAVVAMITGHGIVGFRDPNAIRPIVFGQRHTENGVEYMIASESVALDVLGFTLIRDLAPGEAVYITEEGKLYTRQCAKAPKYAPCIFEHVYLARPDSIMDGISVYKARLRMGEKLADKILRERPDHDIDVVIPIPDTSRTAALELANRLGVKFREGFVKNRYIGRTFIMPGQAARKKSVRQKLNAIELEFRGKNVMLVDDSIVRGTTCKQIIQMAREAGAKNVYFCSAAPAVRYPNVYGIDMPSAHELIAHNRSTEDVSKLIGADWLVYQDLPDLIDAVGGGKIKIDHFDCAVFDGEYVTGDVNEAYLNRIEQARNDATKAKSQAVSAIIDLYND</sequence>
<comment type="function">
    <text evidence="2">Catalyzes the formation of phosphoribosylamine from phosphoribosylpyrophosphate (PRPP) and glutamine.</text>
</comment>
<comment type="catalytic activity">
    <reaction evidence="2">
        <text>5-phospho-beta-D-ribosylamine + L-glutamate + diphosphate = 5-phospho-alpha-D-ribose 1-diphosphate + L-glutamine + H2O</text>
        <dbReference type="Rhea" id="RHEA:14905"/>
        <dbReference type="ChEBI" id="CHEBI:15377"/>
        <dbReference type="ChEBI" id="CHEBI:29985"/>
        <dbReference type="ChEBI" id="CHEBI:33019"/>
        <dbReference type="ChEBI" id="CHEBI:58017"/>
        <dbReference type="ChEBI" id="CHEBI:58359"/>
        <dbReference type="ChEBI" id="CHEBI:58681"/>
        <dbReference type="EC" id="2.4.2.14"/>
    </reaction>
</comment>
<comment type="cofactor">
    <cofactor evidence="2">
        <name>Mg(2+)</name>
        <dbReference type="ChEBI" id="CHEBI:18420"/>
    </cofactor>
    <text evidence="2">Binds 1 Mg(2+) ion per subunit.</text>
</comment>
<comment type="pathway">
    <text evidence="2">Purine metabolism; IMP biosynthesis via de novo pathway; N(1)-(5-phospho-D-ribosyl)glycinamide from 5-phospho-alpha-D-ribose 1-diphosphate: step 1/2.</text>
</comment>
<comment type="similarity">
    <text evidence="2">In the C-terminal section; belongs to the purine/pyrimidine phosphoribosyltransferase family.</text>
</comment>
<keyword id="KW-0315">Glutamine amidotransferase</keyword>
<keyword id="KW-0328">Glycosyltransferase</keyword>
<keyword id="KW-0460">Magnesium</keyword>
<keyword id="KW-0479">Metal-binding</keyword>
<keyword id="KW-0658">Purine biosynthesis</keyword>
<keyword id="KW-1185">Reference proteome</keyword>
<keyword id="KW-0808">Transferase</keyword>
<organism>
    <name type="scientific">Pseudomonas aeruginosa (strain ATCC 15692 / DSM 22644 / CIP 104116 / JCM 14847 / LMG 12228 / 1C / PRS 101 / PAO1)</name>
    <dbReference type="NCBI Taxonomy" id="208964"/>
    <lineage>
        <taxon>Bacteria</taxon>
        <taxon>Pseudomonadati</taxon>
        <taxon>Pseudomonadota</taxon>
        <taxon>Gammaproteobacteria</taxon>
        <taxon>Pseudomonadales</taxon>
        <taxon>Pseudomonadaceae</taxon>
        <taxon>Pseudomonas</taxon>
    </lineage>
</organism>
<feature type="initiator methionine" description="Removed" evidence="1">
    <location>
        <position position="1"/>
    </location>
</feature>
<feature type="chain" id="PRO_0000139641" description="Amidophosphoribosyltransferase">
    <location>
        <begin position="2"/>
        <end position="501"/>
    </location>
</feature>
<feature type="domain" description="Glutamine amidotransferase type-2" evidence="2">
    <location>
        <begin position="2"/>
        <end position="234"/>
    </location>
</feature>
<feature type="active site" description="Nucleophile" evidence="2">
    <location>
        <position position="2"/>
    </location>
</feature>
<feature type="binding site" evidence="2">
    <location>
        <position position="303"/>
    </location>
    <ligand>
        <name>Mg(2+)</name>
        <dbReference type="ChEBI" id="CHEBI:18420"/>
    </ligand>
</feature>
<feature type="binding site" evidence="2">
    <location>
        <position position="365"/>
    </location>
    <ligand>
        <name>Mg(2+)</name>
        <dbReference type="ChEBI" id="CHEBI:18420"/>
    </ligand>
</feature>
<feature type="binding site" evidence="2">
    <location>
        <position position="366"/>
    </location>
    <ligand>
        <name>Mg(2+)</name>
        <dbReference type="ChEBI" id="CHEBI:18420"/>
    </ligand>
</feature>
<feature type="sequence conflict" description="In Ref. 2." evidence="3" ref="2">
    <original>LRERP</original>
    <variation>PPRAS</variation>
    <location>
        <begin position="286"/>
        <end position="290"/>
    </location>
</feature>
<feature type="sequence conflict" description="In Ref. 2; AAA83434." evidence="3" ref="2">
    <original>A</original>
    <variation>R</variation>
    <location>
        <position position="308"/>
    </location>
</feature>
<evidence type="ECO:0000250" key="1"/>
<evidence type="ECO:0000255" key="2">
    <source>
        <dbReference type="HAMAP-Rule" id="MF_01931"/>
    </source>
</evidence>
<evidence type="ECO:0000305" key="3"/>
<gene>
    <name evidence="2" type="primary">purF</name>
    <name type="ordered locus">PA3108</name>
</gene>
<protein>
    <recommendedName>
        <fullName evidence="2">Amidophosphoribosyltransferase</fullName>
        <shortName evidence="2">ATase</shortName>
        <ecNumber evidence="2">2.4.2.14</ecNumber>
    </recommendedName>
    <alternativeName>
        <fullName evidence="2">Glutamine phosphoribosylpyrophosphate amidotransferase</fullName>
        <shortName evidence="2">GPATase</shortName>
    </alternativeName>
</protein>
<accession>Q51342</accession>
<accession>Q9HZB1</accession>